<dbReference type="EMBL" id="CU207366">
    <property type="protein sequence ID" value="CAL65597.1"/>
    <property type="molecule type" value="Genomic_DNA"/>
</dbReference>
<dbReference type="RefSeq" id="WP_011708534.1">
    <property type="nucleotide sequence ID" value="NC_008571.1"/>
</dbReference>
<dbReference type="SMR" id="A0LZ02"/>
<dbReference type="STRING" id="411154.GFO_0619"/>
<dbReference type="KEGG" id="gfo:GFO_0619"/>
<dbReference type="eggNOG" id="COG0335">
    <property type="taxonomic scope" value="Bacteria"/>
</dbReference>
<dbReference type="HOGENOM" id="CLU_103507_2_1_10"/>
<dbReference type="OrthoDB" id="9803541at2"/>
<dbReference type="Proteomes" id="UP000000755">
    <property type="component" value="Chromosome"/>
</dbReference>
<dbReference type="GO" id="GO:0022625">
    <property type="term" value="C:cytosolic large ribosomal subunit"/>
    <property type="evidence" value="ECO:0007669"/>
    <property type="project" value="TreeGrafter"/>
</dbReference>
<dbReference type="GO" id="GO:0003735">
    <property type="term" value="F:structural constituent of ribosome"/>
    <property type="evidence" value="ECO:0007669"/>
    <property type="project" value="InterPro"/>
</dbReference>
<dbReference type="GO" id="GO:0006412">
    <property type="term" value="P:translation"/>
    <property type="evidence" value="ECO:0007669"/>
    <property type="project" value="UniProtKB-UniRule"/>
</dbReference>
<dbReference type="Gene3D" id="2.30.30.790">
    <property type="match status" value="1"/>
</dbReference>
<dbReference type="HAMAP" id="MF_00402">
    <property type="entry name" value="Ribosomal_bL19"/>
    <property type="match status" value="1"/>
</dbReference>
<dbReference type="InterPro" id="IPR001857">
    <property type="entry name" value="Ribosomal_bL19"/>
</dbReference>
<dbReference type="InterPro" id="IPR038657">
    <property type="entry name" value="Ribosomal_bL19_sf"/>
</dbReference>
<dbReference type="InterPro" id="IPR008991">
    <property type="entry name" value="Translation_prot_SH3-like_sf"/>
</dbReference>
<dbReference type="NCBIfam" id="TIGR01024">
    <property type="entry name" value="rplS_bact"/>
    <property type="match status" value="1"/>
</dbReference>
<dbReference type="PANTHER" id="PTHR15680:SF9">
    <property type="entry name" value="LARGE RIBOSOMAL SUBUNIT PROTEIN BL19M"/>
    <property type="match status" value="1"/>
</dbReference>
<dbReference type="PANTHER" id="PTHR15680">
    <property type="entry name" value="RIBOSOMAL PROTEIN L19"/>
    <property type="match status" value="1"/>
</dbReference>
<dbReference type="Pfam" id="PF01245">
    <property type="entry name" value="Ribosomal_L19"/>
    <property type="match status" value="1"/>
</dbReference>
<dbReference type="PIRSF" id="PIRSF002191">
    <property type="entry name" value="Ribosomal_L19"/>
    <property type="match status" value="1"/>
</dbReference>
<dbReference type="PRINTS" id="PR00061">
    <property type="entry name" value="RIBOSOMALL19"/>
</dbReference>
<dbReference type="SUPFAM" id="SSF50104">
    <property type="entry name" value="Translation proteins SH3-like domain"/>
    <property type="match status" value="1"/>
</dbReference>
<accession>A0LZ02</accession>
<gene>
    <name evidence="1" type="primary">rplS</name>
    <name type="ordered locus">GFO_0619</name>
</gene>
<keyword id="KW-0687">Ribonucleoprotein</keyword>
<keyword id="KW-0689">Ribosomal protein</keyword>
<organism>
    <name type="scientific">Christiangramia forsetii (strain DSM 17595 / CGMCC 1.15422 / KT0803)</name>
    <name type="common">Gramella forsetii</name>
    <dbReference type="NCBI Taxonomy" id="411154"/>
    <lineage>
        <taxon>Bacteria</taxon>
        <taxon>Pseudomonadati</taxon>
        <taxon>Bacteroidota</taxon>
        <taxon>Flavobacteriia</taxon>
        <taxon>Flavobacteriales</taxon>
        <taxon>Flavobacteriaceae</taxon>
        <taxon>Christiangramia</taxon>
    </lineage>
</organism>
<evidence type="ECO:0000255" key="1">
    <source>
        <dbReference type="HAMAP-Rule" id="MF_00402"/>
    </source>
</evidence>
<evidence type="ECO:0000305" key="2"/>
<comment type="function">
    <text evidence="1">This protein is located at the 30S-50S ribosomal subunit interface and may play a role in the structure and function of the aminoacyl-tRNA binding site.</text>
</comment>
<comment type="similarity">
    <text evidence="1">Belongs to the bacterial ribosomal protein bL19 family.</text>
</comment>
<sequence length="117" mass="13494">MESLVKYVQDEFVDRKDLPEFSAGDTITVYYEIKEGQKTRTQFFRGVVIQKRGTGSSQTFTIRKMSGTVGVERIFPINLPAIQKIEINKKGSVRRARIFYFRGLTGKKARIKEAIRK</sequence>
<reference key="1">
    <citation type="journal article" date="2006" name="Environ. Microbiol.">
        <title>Whole genome analysis of the marine Bacteroidetes'Gramella forsetii' reveals adaptations to degradation of polymeric organic matter.</title>
        <authorList>
            <person name="Bauer M."/>
            <person name="Kube M."/>
            <person name="Teeling H."/>
            <person name="Richter M."/>
            <person name="Lombardot T."/>
            <person name="Allers E."/>
            <person name="Wuerdemann C.A."/>
            <person name="Quast C."/>
            <person name="Kuhl H."/>
            <person name="Knaust F."/>
            <person name="Woebken D."/>
            <person name="Bischof K."/>
            <person name="Mussmann M."/>
            <person name="Choudhuri J.V."/>
            <person name="Meyer F."/>
            <person name="Reinhardt R."/>
            <person name="Amann R.I."/>
            <person name="Gloeckner F.O."/>
        </authorList>
    </citation>
    <scope>NUCLEOTIDE SEQUENCE [LARGE SCALE GENOMIC DNA]</scope>
    <source>
        <strain>DSM 17595 / CGMCC 1.15422 / KT0803</strain>
    </source>
</reference>
<protein>
    <recommendedName>
        <fullName evidence="1">Large ribosomal subunit protein bL19</fullName>
    </recommendedName>
    <alternativeName>
        <fullName evidence="2">50S ribosomal protein L19</fullName>
    </alternativeName>
</protein>
<feature type="chain" id="PRO_1000049682" description="Large ribosomal subunit protein bL19">
    <location>
        <begin position="1"/>
        <end position="117"/>
    </location>
</feature>
<name>RL19_CHRFK</name>
<proteinExistence type="inferred from homology"/>